<accession>A6GVP1</accession>
<reference key="1">
    <citation type="journal article" date="2007" name="Nat. Biotechnol.">
        <title>Complete genome sequence of the fish pathogen Flavobacterium psychrophilum.</title>
        <authorList>
            <person name="Duchaud E."/>
            <person name="Boussaha M."/>
            <person name="Loux V."/>
            <person name="Bernardet J.-F."/>
            <person name="Michel C."/>
            <person name="Kerouault B."/>
            <person name="Mondot S."/>
            <person name="Nicolas P."/>
            <person name="Bossy R."/>
            <person name="Caron C."/>
            <person name="Bessieres P."/>
            <person name="Gibrat J.-F."/>
            <person name="Claverol S."/>
            <person name="Dumetz F."/>
            <person name="Le Henaff M."/>
            <person name="Benmansour A."/>
        </authorList>
    </citation>
    <scope>NUCLEOTIDE SEQUENCE [LARGE SCALE GENOMIC DNA]</scope>
    <source>
        <strain>ATCC 49511 / DSM 21280 / CIP 103535 / JIP02/86</strain>
    </source>
</reference>
<sequence length="413" mass="46514">MENNTIPKHNTFYAIGLNYKKADAEIRGKFSIDAQSKSNLLQQAKTEGIESLIVTSTCNRTEIYGFAQHPFQLIKLLCENSKGTVEDFQKVAYVYKNQEAISHLFKVGTGLDSQILGDFEIISQIKIAFTESKALDLANSFMERLVNSVIQASKRIKTDTDISSGATSVSFASVQYIMKNVANIGEKNILLFGTGKIGRNTCENLVKHSKNEHITLINRTKDKAEKLAGKLNLIVKDYADLHIELQKADVLVVATGAQNPTIDKAILNLKKPLLILDLSIPKNVNSDVNELENVTLVHLDDLSQITDETLEKRKLHIPAAEAIIEEIKNEFSSWMNGRKYAPTIHALKAKLNTIKEKELIFQRKKLSNFDEEQAELISNRIIQKITNHFANHLKDEETMVDESIDYINKIFQL</sequence>
<proteinExistence type="inferred from homology"/>
<keyword id="KW-0521">NADP</keyword>
<keyword id="KW-0560">Oxidoreductase</keyword>
<keyword id="KW-0627">Porphyrin biosynthesis</keyword>
<keyword id="KW-1185">Reference proteome</keyword>
<organism>
    <name type="scientific">Flavobacterium psychrophilum (strain ATCC 49511 / DSM 21280 / CIP 103535 / JIP02/86)</name>
    <dbReference type="NCBI Taxonomy" id="402612"/>
    <lineage>
        <taxon>Bacteria</taxon>
        <taxon>Pseudomonadati</taxon>
        <taxon>Bacteroidota</taxon>
        <taxon>Flavobacteriia</taxon>
        <taxon>Flavobacteriales</taxon>
        <taxon>Flavobacteriaceae</taxon>
        <taxon>Flavobacterium</taxon>
    </lineage>
</organism>
<name>HEM1_FLAPJ</name>
<gene>
    <name evidence="1" type="primary">hemA</name>
    <name type="ordered locus">FP0044</name>
</gene>
<feature type="chain" id="PRO_0000335034" description="Glutamyl-tRNA reductase">
    <location>
        <begin position="1"/>
        <end position="413"/>
    </location>
</feature>
<feature type="active site" description="Nucleophile" evidence="1">
    <location>
        <position position="58"/>
    </location>
</feature>
<feature type="binding site" evidence="1">
    <location>
        <begin position="57"/>
        <end position="60"/>
    </location>
    <ligand>
        <name>substrate</name>
    </ligand>
</feature>
<feature type="binding site" evidence="1">
    <location>
        <position position="113"/>
    </location>
    <ligand>
        <name>substrate</name>
    </ligand>
</feature>
<feature type="binding site" evidence="1">
    <location>
        <begin position="118"/>
        <end position="120"/>
    </location>
    <ligand>
        <name>substrate</name>
    </ligand>
</feature>
<feature type="binding site" evidence="1">
    <location>
        <position position="124"/>
    </location>
    <ligand>
        <name>substrate</name>
    </ligand>
</feature>
<feature type="binding site" evidence="1">
    <location>
        <begin position="193"/>
        <end position="198"/>
    </location>
    <ligand>
        <name>NADP(+)</name>
        <dbReference type="ChEBI" id="CHEBI:58349"/>
    </ligand>
</feature>
<feature type="site" description="Important for activity" evidence="1">
    <location>
        <position position="103"/>
    </location>
</feature>
<evidence type="ECO:0000255" key="1">
    <source>
        <dbReference type="HAMAP-Rule" id="MF_00087"/>
    </source>
</evidence>
<protein>
    <recommendedName>
        <fullName evidence="1">Glutamyl-tRNA reductase</fullName>
        <shortName evidence="1">GluTR</shortName>
        <ecNumber evidence="1">1.2.1.70</ecNumber>
    </recommendedName>
</protein>
<comment type="function">
    <text evidence="1">Catalyzes the NADPH-dependent reduction of glutamyl-tRNA(Glu) to glutamate 1-semialdehyde (GSA).</text>
</comment>
<comment type="catalytic activity">
    <reaction evidence="1">
        <text>(S)-4-amino-5-oxopentanoate + tRNA(Glu) + NADP(+) = L-glutamyl-tRNA(Glu) + NADPH + H(+)</text>
        <dbReference type="Rhea" id="RHEA:12344"/>
        <dbReference type="Rhea" id="RHEA-COMP:9663"/>
        <dbReference type="Rhea" id="RHEA-COMP:9680"/>
        <dbReference type="ChEBI" id="CHEBI:15378"/>
        <dbReference type="ChEBI" id="CHEBI:57501"/>
        <dbReference type="ChEBI" id="CHEBI:57783"/>
        <dbReference type="ChEBI" id="CHEBI:58349"/>
        <dbReference type="ChEBI" id="CHEBI:78442"/>
        <dbReference type="ChEBI" id="CHEBI:78520"/>
        <dbReference type="EC" id="1.2.1.70"/>
    </reaction>
</comment>
<comment type="pathway">
    <text evidence="1">Porphyrin-containing compound metabolism; protoporphyrin-IX biosynthesis; 5-aminolevulinate from L-glutamyl-tRNA(Glu): step 1/2.</text>
</comment>
<comment type="subunit">
    <text evidence="1">Homodimer.</text>
</comment>
<comment type="domain">
    <text evidence="1">Possesses an unusual extended V-shaped dimeric structure with each monomer consisting of three distinct domains arranged along a curved 'spinal' alpha-helix. The N-terminal catalytic domain specifically recognizes the glutamate moiety of the substrate. The second domain is the NADPH-binding domain, and the third C-terminal domain is responsible for dimerization.</text>
</comment>
<comment type="miscellaneous">
    <text evidence="1">During catalysis, the active site Cys acts as a nucleophile attacking the alpha-carbonyl group of tRNA-bound glutamate with the formation of a thioester intermediate between enzyme and glutamate, and the concomitant release of tRNA(Glu). The thioester intermediate is finally reduced by direct hydride transfer from NADPH, to form the product GSA.</text>
</comment>
<comment type="similarity">
    <text evidence="1">Belongs to the glutamyl-tRNA reductase family.</text>
</comment>
<dbReference type="EC" id="1.2.1.70" evidence="1"/>
<dbReference type="EMBL" id="AM398681">
    <property type="protein sequence ID" value="CAL42163.1"/>
    <property type="molecule type" value="Genomic_DNA"/>
</dbReference>
<dbReference type="RefSeq" id="WP_011962225.1">
    <property type="nucleotide sequence ID" value="NC_009613.3"/>
</dbReference>
<dbReference type="RefSeq" id="YP_001294984.1">
    <property type="nucleotide sequence ID" value="NC_009613.3"/>
</dbReference>
<dbReference type="SMR" id="A6GVP1"/>
<dbReference type="STRING" id="402612.FP0044"/>
<dbReference type="EnsemblBacteria" id="CAL42163">
    <property type="protein sequence ID" value="CAL42163"/>
    <property type="gene ID" value="FP0044"/>
</dbReference>
<dbReference type="GeneID" id="66553655"/>
<dbReference type="KEGG" id="fps:FP0044"/>
<dbReference type="PATRIC" id="fig|402612.5.peg.48"/>
<dbReference type="eggNOG" id="COG0373">
    <property type="taxonomic scope" value="Bacteria"/>
</dbReference>
<dbReference type="HOGENOM" id="CLU_035113_2_2_10"/>
<dbReference type="OrthoDB" id="110209at2"/>
<dbReference type="UniPathway" id="UPA00251">
    <property type="reaction ID" value="UER00316"/>
</dbReference>
<dbReference type="Proteomes" id="UP000006394">
    <property type="component" value="Chromosome"/>
</dbReference>
<dbReference type="GO" id="GO:0008883">
    <property type="term" value="F:glutamyl-tRNA reductase activity"/>
    <property type="evidence" value="ECO:0007669"/>
    <property type="project" value="UniProtKB-UniRule"/>
</dbReference>
<dbReference type="GO" id="GO:0050661">
    <property type="term" value="F:NADP binding"/>
    <property type="evidence" value="ECO:0007669"/>
    <property type="project" value="InterPro"/>
</dbReference>
<dbReference type="GO" id="GO:0019353">
    <property type="term" value="P:protoporphyrinogen IX biosynthetic process from glutamate"/>
    <property type="evidence" value="ECO:0007669"/>
    <property type="project" value="TreeGrafter"/>
</dbReference>
<dbReference type="FunFam" id="3.30.460.30:FF:000001">
    <property type="entry name" value="Glutamyl-tRNA reductase"/>
    <property type="match status" value="1"/>
</dbReference>
<dbReference type="Gene3D" id="3.30.460.30">
    <property type="entry name" value="Glutamyl-tRNA reductase, N-terminal domain"/>
    <property type="match status" value="1"/>
</dbReference>
<dbReference type="Gene3D" id="3.40.50.720">
    <property type="entry name" value="NAD(P)-binding Rossmann-like Domain"/>
    <property type="match status" value="1"/>
</dbReference>
<dbReference type="HAMAP" id="MF_00087">
    <property type="entry name" value="Glu_tRNA_reductase"/>
    <property type="match status" value="1"/>
</dbReference>
<dbReference type="InterPro" id="IPR000343">
    <property type="entry name" value="4pyrrol_synth_GluRdtase"/>
</dbReference>
<dbReference type="InterPro" id="IPR015896">
    <property type="entry name" value="4pyrrol_synth_GluRdtase_dimer"/>
</dbReference>
<dbReference type="InterPro" id="IPR015895">
    <property type="entry name" value="4pyrrol_synth_GluRdtase_N"/>
</dbReference>
<dbReference type="InterPro" id="IPR018214">
    <property type="entry name" value="GluRdtase_CS"/>
</dbReference>
<dbReference type="InterPro" id="IPR036453">
    <property type="entry name" value="GluRdtase_dimer_dom_sf"/>
</dbReference>
<dbReference type="InterPro" id="IPR036343">
    <property type="entry name" value="GluRdtase_N_sf"/>
</dbReference>
<dbReference type="InterPro" id="IPR036291">
    <property type="entry name" value="NAD(P)-bd_dom_sf"/>
</dbReference>
<dbReference type="InterPro" id="IPR006151">
    <property type="entry name" value="Shikm_DH/Glu-tRNA_Rdtase"/>
</dbReference>
<dbReference type="NCBIfam" id="TIGR01035">
    <property type="entry name" value="hemA"/>
    <property type="match status" value="1"/>
</dbReference>
<dbReference type="PANTHER" id="PTHR43013">
    <property type="entry name" value="GLUTAMYL-TRNA REDUCTASE"/>
    <property type="match status" value="1"/>
</dbReference>
<dbReference type="PANTHER" id="PTHR43013:SF1">
    <property type="entry name" value="GLUTAMYL-TRNA REDUCTASE"/>
    <property type="match status" value="1"/>
</dbReference>
<dbReference type="Pfam" id="PF00745">
    <property type="entry name" value="GlutR_dimer"/>
    <property type="match status" value="1"/>
</dbReference>
<dbReference type="Pfam" id="PF05201">
    <property type="entry name" value="GlutR_N"/>
    <property type="match status" value="1"/>
</dbReference>
<dbReference type="Pfam" id="PF01488">
    <property type="entry name" value="Shikimate_DH"/>
    <property type="match status" value="1"/>
</dbReference>
<dbReference type="PIRSF" id="PIRSF000445">
    <property type="entry name" value="4pyrrol_synth_GluRdtase"/>
    <property type="match status" value="1"/>
</dbReference>
<dbReference type="SUPFAM" id="SSF69742">
    <property type="entry name" value="Glutamyl tRNA-reductase catalytic, N-terminal domain"/>
    <property type="match status" value="1"/>
</dbReference>
<dbReference type="SUPFAM" id="SSF69075">
    <property type="entry name" value="Glutamyl tRNA-reductase dimerization domain"/>
    <property type="match status" value="1"/>
</dbReference>
<dbReference type="SUPFAM" id="SSF51735">
    <property type="entry name" value="NAD(P)-binding Rossmann-fold domains"/>
    <property type="match status" value="1"/>
</dbReference>
<dbReference type="PROSITE" id="PS00747">
    <property type="entry name" value="GLUTR"/>
    <property type="match status" value="1"/>
</dbReference>